<sequence>MAAPRRYCAGLVRALLGARQVGSHAGREWLAPPGCLLGNQARCVSCVVGSTFSGPLLASASSRYGQDSALDRILGFSQPDSSLVPSVPAVSVHRDEQNLLLVHTPDMPENPRVLRVVLLGAPNAGKSTLSNQLLGRKVFPVSKKVHTTRCQALGVITEKETQVILLDTPGIISPVKQKRHHLERSLLEDPWTSMESADLVVVLVDVSDKWTRSRLNPQVLQCLTKFSQVPSILVLNKVDCLKQKSVLLELTAALTEGVVNGKKLNIKQALRSRSSTHCPGPETEGPNAHSVRNPQRIGWPYFQEIFMLSALNNKDVNTLKQYLLTQAQPGPWEFHSGVLTSQTPEEICANKIREKLLEYLPEEVPYGVQQKTVIWEEGPSGELVIQQNLLVPKESHVRILIGQKGLLISQIAQEVGRDLMDIFHCDVLIRLSVKLLK</sequence>
<protein>
    <recommendedName>
        <fullName>GTPase Era, mitochondrial</fullName>
        <shortName>M-ERA</shortName>
    </recommendedName>
    <alternativeName>
        <fullName>Conserved ERA-like GTPase</fullName>
        <shortName>CEGA</shortName>
    </alternativeName>
    <alternativeName>
        <fullName>ERA-W</fullName>
    </alternativeName>
    <alternativeName>
        <fullName>ERA-like protein 1</fullName>
    </alternativeName>
</protein>
<evidence type="ECO:0000250" key="1"/>
<evidence type="ECO:0000250" key="2">
    <source>
        <dbReference type="UniProtKB" id="O75616"/>
    </source>
</evidence>
<evidence type="ECO:0000250" key="3">
    <source>
        <dbReference type="UniProtKB" id="P06616"/>
    </source>
</evidence>
<evidence type="ECO:0000255" key="4"/>
<evidence type="ECO:0000255" key="5">
    <source>
        <dbReference type="PROSITE-ProRule" id="PRU01050"/>
    </source>
</evidence>
<evidence type="ECO:0000256" key="6">
    <source>
        <dbReference type="SAM" id="MobiDB-lite"/>
    </source>
</evidence>
<evidence type="ECO:0000305" key="7"/>
<accession>Q9CZU4</accession>
<accession>Q6NV78</accession>
<accession>Q8VE60</accession>
<accession>Q925U1</accession>
<proteinExistence type="evidence at transcript level"/>
<organism>
    <name type="scientific">Mus musculus</name>
    <name type="common">Mouse</name>
    <dbReference type="NCBI Taxonomy" id="10090"/>
    <lineage>
        <taxon>Eukaryota</taxon>
        <taxon>Metazoa</taxon>
        <taxon>Chordata</taxon>
        <taxon>Craniata</taxon>
        <taxon>Vertebrata</taxon>
        <taxon>Euteleostomi</taxon>
        <taxon>Mammalia</taxon>
        <taxon>Eutheria</taxon>
        <taxon>Euarchontoglires</taxon>
        <taxon>Glires</taxon>
        <taxon>Rodentia</taxon>
        <taxon>Myomorpha</taxon>
        <taxon>Muroidea</taxon>
        <taxon>Muridae</taxon>
        <taxon>Murinae</taxon>
        <taxon>Mus</taxon>
        <taxon>Mus</taxon>
    </lineage>
</organism>
<comment type="function">
    <text evidence="2">Probable GTPase that plays a role in the mitochondrial ribosomal small subunit assembly. Specifically binds the 12S mitochondrial rRNA (12S mt-rRNA) to a 33 nucleotide section delineating the 3' terminal stem-loop region. May act as a chaperone that protects the 12S mt-rRNA on the 28S mitoribosomal subunit during ribosomal small subunit assembly (By similarity).</text>
</comment>
<comment type="subcellular location">
    <subcellularLocation>
        <location evidence="1">Mitochondrion matrix</location>
    </subcellularLocation>
    <subcellularLocation>
        <location evidence="1">Mitochondrion inner membrane</location>
        <topology evidence="1">Peripheral membrane protein</topology>
    </subcellularLocation>
    <text evidence="1">Localizes on the matrix side on the mitochondrial inner membrane.</text>
</comment>
<comment type="similarity">
    <text evidence="5 7">Belongs to the TRAFAC class TrmE-Era-EngA-EngB-Septin-like GTPase superfamily. Era GTPase family.</text>
</comment>
<gene>
    <name type="primary">Eral1</name>
    <name type="synonym">Mera</name>
</gene>
<feature type="transit peptide" description="Mitochondrion" evidence="4">
    <location>
        <begin position="1"/>
        <end position="20"/>
    </location>
</feature>
<feature type="chain" id="PRO_0000180082" description="GTPase Era, mitochondrial">
    <location>
        <begin position="21"/>
        <end position="437"/>
    </location>
</feature>
<feature type="domain" description="Era-type G" evidence="5">
    <location>
        <begin position="112"/>
        <end position="330"/>
    </location>
</feature>
<feature type="domain" description="KH type-2">
    <location>
        <begin position="360"/>
        <end position="437"/>
    </location>
</feature>
<feature type="region of interest" description="G1" evidence="5">
    <location>
        <begin position="120"/>
        <end position="127"/>
    </location>
</feature>
<feature type="region of interest" description="G2" evidence="5">
    <location>
        <begin position="146"/>
        <end position="150"/>
    </location>
</feature>
<feature type="region of interest" description="G3" evidence="5">
    <location>
        <begin position="167"/>
        <end position="170"/>
    </location>
</feature>
<feature type="region of interest" description="G4" evidence="5">
    <location>
        <begin position="236"/>
        <end position="239"/>
    </location>
</feature>
<feature type="region of interest" description="Disordered" evidence="6">
    <location>
        <begin position="270"/>
        <end position="292"/>
    </location>
</feature>
<feature type="region of interest" description="G5" evidence="5">
    <location>
        <begin position="308"/>
        <end position="310"/>
    </location>
</feature>
<feature type="binding site" evidence="3">
    <location>
        <begin position="120"/>
        <end position="127"/>
    </location>
    <ligand>
        <name>GTP</name>
        <dbReference type="ChEBI" id="CHEBI:37565"/>
    </ligand>
</feature>
<feature type="binding site" evidence="3">
    <location>
        <begin position="167"/>
        <end position="171"/>
    </location>
    <ligand>
        <name>GTP</name>
        <dbReference type="ChEBI" id="CHEBI:37565"/>
    </ligand>
</feature>
<feature type="binding site" evidence="3">
    <location>
        <begin position="236"/>
        <end position="239"/>
    </location>
    <ligand>
        <name>GTP</name>
        <dbReference type="ChEBI" id="CHEBI:37565"/>
    </ligand>
</feature>
<feature type="modified residue" description="Phosphoserine" evidence="2">
    <location>
        <position position="173"/>
    </location>
</feature>
<feature type="sequence conflict" description="In Ref. 1; BAB56113." evidence="7" ref="1">
    <original>G</original>
    <variation>W</variation>
    <location>
        <position position="154"/>
    </location>
</feature>
<feature type="sequence conflict" description="In Ref. 4; AAH68271." evidence="7" ref="4">
    <original>L</original>
    <variation>S</variation>
    <location>
        <position position="407"/>
    </location>
</feature>
<reference key="1">
    <citation type="journal article" date="2001" name="Genes Cells">
        <title>Mammalian homologue of E. coli Ras-like GTPase (ERA) is a possible apoptosis regulator with RNA binding activity.</title>
        <authorList>
            <person name="Akiyama T."/>
            <person name="Gohda J."/>
            <person name="Shibata S."/>
            <person name="Nomura Y."/>
            <person name="Azuma S."/>
            <person name="Ohmori Y."/>
            <person name="Sugano S."/>
            <person name="Arai H."/>
            <person name="Yamamoto T."/>
            <person name="Inoue J."/>
        </authorList>
    </citation>
    <scope>NUCLEOTIDE SEQUENCE [MRNA]</scope>
</reference>
<reference key="2">
    <citation type="journal article" date="2005" name="Science">
        <title>The transcriptional landscape of the mammalian genome.</title>
        <authorList>
            <person name="Carninci P."/>
            <person name="Kasukawa T."/>
            <person name="Katayama S."/>
            <person name="Gough J."/>
            <person name="Frith M.C."/>
            <person name="Maeda N."/>
            <person name="Oyama R."/>
            <person name="Ravasi T."/>
            <person name="Lenhard B."/>
            <person name="Wells C."/>
            <person name="Kodzius R."/>
            <person name="Shimokawa K."/>
            <person name="Bajic V.B."/>
            <person name="Brenner S.E."/>
            <person name="Batalov S."/>
            <person name="Forrest A.R."/>
            <person name="Zavolan M."/>
            <person name="Davis M.J."/>
            <person name="Wilming L.G."/>
            <person name="Aidinis V."/>
            <person name="Allen J.E."/>
            <person name="Ambesi-Impiombato A."/>
            <person name="Apweiler R."/>
            <person name="Aturaliya R.N."/>
            <person name="Bailey T.L."/>
            <person name="Bansal M."/>
            <person name="Baxter L."/>
            <person name="Beisel K.W."/>
            <person name="Bersano T."/>
            <person name="Bono H."/>
            <person name="Chalk A.M."/>
            <person name="Chiu K.P."/>
            <person name="Choudhary V."/>
            <person name="Christoffels A."/>
            <person name="Clutterbuck D.R."/>
            <person name="Crowe M.L."/>
            <person name="Dalla E."/>
            <person name="Dalrymple B.P."/>
            <person name="de Bono B."/>
            <person name="Della Gatta G."/>
            <person name="di Bernardo D."/>
            <person name="Down T."/>
            <person name="Engstrom P."/>
            <person name="Fagiolini M."/>
            <person name="Faulkner G."/>
            <person name="Fletcher C.F."/>
            <person name="Fukushima T."/>
            <person name="Furuno M."/>
            <person name="Futaki S."/>
            <person name="Gariboldi M."/>
            <person name="Georgii-Hemming P."/>
            <person name="Gingeras T.R."/>
            <person name="Gojobori T."/>
            <person name="Green R.E."/>
            <person name="Gustincich S."/>
            <person name="Harbers M."/>
            <person name="Hayashi Y."/>
            <person name="Hensch T.K."/>
            <person name="Hirokawa N."/>
            <person name="Hill D."/>
            <person name="Huminiecki L."/>
            <person name="Iacono M."/>
            <person name="Ikeo K."/>
            <person name="Iwama A."/>
            <person name="Ishikawa T."/>
            <person name="Jakt M."/>
            <person name="Kanapin A."/>
            <person name="Katoh M."/>
            <person name="Kawasawa Y."/>
            <person name="Kelso J."/>
            <person name="Kitamura H."/>
            <person name="Kitano H."/>
            <person name="Kollias G."/>
            <person name="Krishnan S.P."/>
            <person name="Kruger A."/>
            <person name="Kummerfeld S.K."/>
            <person name="Kurochkin I.V."/>
            <person name="Lareau L.F."/>
            <person name="Lazarevic D."/>
            <person name="Lipovich L."/>
            <person name="Liu J."/>
            <person name="Liuni S."/>
            <person name="McWilliam S."/>
            <person name="Madan Babu M."/>
            <person name="Madera M."/>
            <person name="Marchionni L."/>
            <person name="Matsuda H."/>
            <person name="Matsuzawa S."/>
            <person name="Miki H."/>
            <person name="Mignone F."/>
            <person name="Miyake S."/>
            <person name="Morris K."/>
            <person name="Mottagui-Tabar S."/>
            <person name="Mulder N."/>
            <person name="Nakano N."/>
            <person name="Nakauchi H."/>
            <person name="Ng P."/>
            <person name="Nilsson R."/>
            <person name="Nishiguchi S."/>
            <person name="Nishikawa S."/>
            <person name="Nori F."/>
            <person name="Ohara O."/>
            <person name="Okazaki Y."/>
            <person name="Orlando V."/>
            <person name="Pang K.C."/>
            <person name="Pavan W.J."/>
            <person name="Pavesi G."/>
            <person name="Pesole G."/>
            <person name="Petrovsky N."/>
            <person name="Piazza S."/>
            <person name="Reed J."/>
            <person name="Reid J.F."/>
            <person name="Ring B.Z."/>
            <person name="Ringwald M."/>
            <person name="Rost B."/>
            <person name="Ruan Y."/>
            <person name="Salzberg S.L."/>
            <person name="Sandelin A."/>
            <person name="Schneider C."/>
            <person name="Schoenbach C."/>
            <person name="Sekiguchi K."/>
            <person name="Semple C.A."/>
            <person name="Seno S."/>
            <person name="Sessa L."/>
            <person name="Sheng Y."/>
            <person name="Shibata Y."/>
            <person name="Shimada H."/>
            <person name="Shimada K."/>
            <person name="Silva D."/>
            <person name="Sinclair B."/>
            <person name="Sperling S."/>
            <person name="Stupka E."/>
            <person name="Sugiura K."/>
            <person name="Sultana R."/>
            <person name="Takenaka Y."/>
            <person name="Taki K."/>
            <person name="Tammoja K."/>
            <person name="Tan S.L."/>
            <person name="Tang S."/>
            <person name="Taylor M.S."/>
            <person name="Tegner J."/>
            <person name="Teichmann S.A."/>
            <person name="Ueda H.R."/>
            <person name="van Nimwegen E."/>
            <person name="Verardo R."/>
            <person name="Wei C.L."/>
            <person name="Yagi K."/>
            <person name="Yamanishi H."/>
            <person name="Zabarovsky E."/>
            <person name="Zhu S."/>
            <person name="Zimmer A."/>
            <person name="Hide W."/>
            <person name="Bult C."/>
            <person name="Grimmond S.M."/>
            <person name="Teasdale R.D."/>
            <person name="Liu E.T."/>
            <person name="Brusic V."/>
            <person name="Quackenbush J."/>
            <person name="Wahlestedt C."/>
            <person name="Mattick J.S."/>
            <person name="Hume D.A."/>
            <person name="Kai C."/>
            <person name="Sasaki D."/>
            <person name="Tomaru Y."/>
            <person name="Fukuda S."/>
            <person name="Kanamori-Katayama M."/>
            <person name="Suzuki M."/>
            <person name="Aoki J."/>
            <person name="Arakawa T."/>
            <person name="Iida J."/>
            <person name="Imamura K."/>
            <person name="Itoh M."/>
            <person name="Kato T."/>
            <person name="Kawaji H."/>
            <person name="Kawagashira N."/>
            <person name="Kawashima T."/>
            <person name="Kojima M."/>
            <person name="Kondo S."/>
            <person name="Konno H."/>
            <person name="Nakano K."/>
            <person name="Ninomiya N."/>
            <person name="Nishio T."/>
            <person name="Okada M."/>
            <person name="Plessy C."/>
            <person name="Shibata K."/>
            <person name="Shiraki T."/>
            <person name="Suzuki S."/>
            <person name="Tagami M."/>
            <person name="Waki K."/>
            <person name="Watahiki A."/>
            <person name="Okamura-Oho Y."/>
            <person name="Suzuki H."/>
            <person name="Kawai J."/>
            <person name="Hayashizaki Y."/>
        </authorList>
    </citation>
    <scope>NUCLEOTIDE SEQUENCE [LARGE SCALE MRNA]</scope>
    <source>
        <strain>C57BL/6J</strain>
    </source>
</reference>
<reference key="3">
    <citation type="journal article" date="2009" name="PLoS Biol.">
        <title>Lineage-specific biology revealed by a finished genome assembly of the mouse.</title>
        <authorList>
            <person name="Church D.M."/>
            <person name="Goodstadt L."/>
            <person name="Hillier L.W."/>
            <person name="Zody M.C."/>
            <person name="Goldstein S."/>
            <person name="She X."/>
            <person name="Bult C.J."/>
            <person name="Agarwala R."/>
            <person name="Cherry J.L."/>
            <person name="DiCuccio M."/>
            <person name="Hlavina W."/>
            <person name="Kapustin Y."/>
            <person name="Meric P."/>
            <person name="Maglott D."/>
            <person name="Birtle Z."/>
            <person name="Marques A.C."/>
            <person name="Graves T."/>
            <person name="Zhou S."/>
            <person name="Teague B."/>
            <person name="Potamousis K."/>
            <person name="Churas C."/>
            <person name="Place M."/>
            <person name="Herschleb J."/>
            <person name="Runnheim R."/>
            <person name="Forrest D."/>
            <person name="Amos-Landgraf J."/>
            <person name="Schwartz D.C."/>
            <person name="Cheng Z."/>
            <person name="Lindblad-Toh K."/>
            <person name="Eichler E.E."/>
            <person name="Ponting C.P."/>
        </authorList>
    </citation>
    <scope>NUCLEOTIDE SEQUENCE [LARGE SCALE GENOMIC DNA]</scope>
    <source>
        <strain>C57BL/6J</strain>
    </source>
</reference>
<reference key="4">
    <citation type="journal article" date="2004" name="Genome Res.">
        <title>The status, quality, and expansion of the NIH full-length cDNA project: the Mammalian Gene Collection (MGC).</title>
        <authorList>
            <consortium name="The MGC Project Team"/>
        </authorList>
    </citation>
    <scope>NUCLEOTIDE SEQUENCE [LARGE SCALE MRNA]</scope>
    <source>
        <strain>129/Sv X 129SvCp</strain>
        <strain>Czech II</strain>
        <tissue>Mammary tumor</tissue>
    </source>
</reference>
<keyword id="KW-0342">GTP-binding</keyword>
<keyword id="KW-0472">Membrane</keyword>
<keyword id="KW-0496">Mitochondrion</keyword>
<keyword id="KW-0999">Mitochondrion inner membrane</keyword>
<keyword id="KW-0547">Nucleotide-binding</keyword>
<keyword id="KW-0597">Phosphoprotein</keyword>
<keyword id="KW-1185">Reference proteome</keyword>
<keyword id="KW-0690">Ribosome biogenesis</keyword>
<keyword id="KW-0694">RNA-binding</keyword>
<keyword id="KW-0699">rRNA-binding</keyword>
<keyword id="KW-0809">Transit peptide</keyword>
<dbReference type="EMBL" id="AB049389">
    <property type="protein sequence ID" value="BAB56113.1"/>
    <property type="molecule type" value="mRNA"/>
</dbReference>
<dbReference type="EMBL" id="AK012155">
    <property type="protein sequence ID" value="BAB28065.1"/>
    <property type="molecule type" value="mRNA"/>
</dbReference>
<dbReference type="EMBL" id="AL669840">
    <property type="status" value="NOT_ANNOTATED_CDS"/>
    <property type="molecule type" value="Genomic_DNA"/>
</dbReference>
<dbReference type="EMBL" id="BC019728">
    <property type="protein sequence ID" value="AAH19728.1"/>
    <property type="molecule type" value="mRNA"/>
</dbReference>
<dbReference type="EMBL" id="BC068271">
    <property type="protein sequence ID" value="AAH68271.1"/>
    <property type="molecule type" value="mRNA"/>
</dbReference>
<dbReference type="CCDS" id="CCDS48856.1"/>
<dbReference type="RefSeq" id="NP_071708.2">
    <property type="nucleotide sequence ID" value="NM_022313.2"/>
</dbReference>
<dbReference type="SMR" id="Q9CZU4"/>
<dbReference type="FunCoup" id="Q9CZU4">
    <property type="interactions" value="3370"/>
</dbReference>
<dbReference type="STRING" id="10090.ENSMUSP00000021183"/>
<dbReference type="PhosphoSitePlus" id="Q9CZU4"/>
<dbReference type="PaxDb" id="10090-ENSMUSP00000021183"/>
<dbReference type="PeptideAtlas" id="Q9CZU4"/>
<dbReference type="ProteomicsDB" id="275644"/>
<dbReference type="Pumba" id="Q9CZU4"/>
<dbReference type="Antibodypedia" id="14896">
    <property type="antibodies" value="210 antibodies from 27 providers"/>
</dbReference>
<dbReference type="DNASU" id="57837"/>
<dbReference type="Ensembl" id="ENSMUST00000021183.4">
    <property type="protein sequence ID" value="ENSMUSP00000021183.4"/>
    <property type="gene ID" value="ENSMUSG00000020832.15"/>
</dbReference>
<dbReference type="GeneID" id="57837"/>
<dbReference type="KEGG" id="mmu:57837"/>
<dbReference type="UCSC" id="uc007kia.2">
    <property type="organism name" value="mouse"/>
</dbReference>
<dbReference type="AGR" id="MGI:1889295"/>
<dbReference type="CTD" id="26284"/>
<dbReference type="MGI" id="MGI:1889295">
    <property type="gene designation" value="Eral1"/>
</dbReference>
<dbReference type="VEuPathDB" id="HostDB:ENSMUSG00000020832"/>
<dbReference type="eggNOG" id="KOG1423">
    <property type="taxonomic scope" value="Eukaryota"/>
</dbReference>
<dbReference type="GeneTree" id="ENSGT00390000013800"/>
<dbReference type="HOGENOM" id="CLU_038009_2_1_1"/>
<dbReference type="InParanoid" id="Q9CZU4"/>
<dbReference type="OMA" id="WAEVDVI"/>
<dbReference type="OrthoDB" id="8954335at2759"/>
<dbReference type="PhylomeDB" id="Q9CZU4"/>
<dbReference type="TreeFam" id="TF321650"/>
<dbReference type="Reactome" id="R-MMU-5389840">
    <property type="pathway name" value="Mitochondrial translation elongation"/>
</dbReference>
<dbReference type="Reactome" id="R-MMU-5419276">
    <property type="pathway name" value="Mitochondrial translation termination"/>
</dbReference>
<dbReference type="BioGRID-ORCS" id="57837">
    <property type="hits" value="25 hits in 77 CRISPR screens"/>
</dbReference>
<dbReference type="ChiTaRS" id="Eral1">
    <property type="organism name" value="mouse"/>
</dbReference>
<dbReference type="PRO" id="PR:Q9CZU4"/>
<dbReference type="Proteomes" id="UP000000589">
    <property type="component" value="Chromosome 11"/>
</dbReference>
<dbReference type="RNAct" id="Q9CZU4">
    <property type="molecule type" value="protein"/>
</dbReference>
<dbReference type="Bgee" id="ENSMUSG00000020832">
    <property type="expression patterns" value="Expressed in hindlimb stylopod muscle and 221 other cell types or tissues"/>
</dbReference>
<dbReference type="GO" id="GO:0005829">
    <property type="term" value="C:cytosol"/>
    <property type="evidence" value="ECO:0007669"/>
    <property type="project" value="Ensembl"/>
</dbReference>
<dbReference type="GO" id="GO:0005743">
    <property type="term" value="C:mitochondrial inner membrane"/>
    <property type="evidence" value="ECO:0007669"/>
    <property type="project" value="UniProtKB-SubCell"/>
</dbReference>
<dbReference type="GO" id="GO:0005759">
    <property type="term" value="C:mitochondrial matrix"/>
    <property type="evidence" value="ECO:0000250"/>
    <property type="project" value="UniProtKB"/>
</dbReference>
<dbReference type="GO" id="GO:0005525">
    <property type="term" value="F:GTP binding"/>
    <property type="evidence" value="ECO:0007669"/>
    <property type="project" value="UniProtKB-KW"/>
</dbReference>
<dbReference type="GO" id="GO:0043024">
    <property type="term" value="F:ribosomal small subunit binding"/>
    <property type="evidence" value="ECO:0000250"/>
    <property type="project" value="UniProtKB"/>
</dbReference>
<dbReference type="GO" id="GO:0019843">
    <property type="term" value="F:rRNA binding"/>
    <property type="evidence" value="ECO:0000250"/>
    <property type="project" value="UniProtKB"/>
</dbReference>
<dbReference type="GO" id="GO:0000028">
    <property type="term" value="P:ribosomal small subunit assembly"/>
    <property type="evidence" value="ECO:0000250"/>
    <property type="project" value="UniProtKB"/>
</dbReference>
<dbReference type="CDD" id="cd04163">
    <property type="entry name" value="Era"/>
    <property type="match status" value="1"/>
</dbReference>
<dbReference type="CDD" id="cd22534">
    <property type="entry name" value="KH-II_Era"/>
    <property type="match status" value="1"/>
</dbReference>
<dbReference type="FunFam" id="3.30.300.20:FF:000016">
    <property type="entry name" value="GTPase Era, mitochondrial isoform 1"/>
    <property type="match status" value="1"/>
</dbReference>
<dbReference type="FunFam" id="3.40.50.300:FF:001024">
    <property type="entry name" value="GTPase Era, mitochondrial isoform 1"/>
    <property type="match status" value="1"/>
</dbReference>
<dbReference type="Gene3D" id="3.30.300.20">
    <property type="match status" value="1"/>
</dbReference>
<dbReference type="Gene3D" id="3.40.50.300">
    <property type="entry name" value="P-loop containing nucleotide triphosphate hydrolases"/>
    <property type="match status" value="1"/>
</dbReference>
<dbReference type="HAMAP" id="MF_00367">
    <property type="entry name" value="GTPase_Era"/>
    <property type="match status" value="1"/>
</dbReference>
<dbReference type="InterPro" id="IPR030388">
    <property type="entry name" value="G_ERA_dom"/>
</dbReference>
<dbReference type="InterPro" id="IPR006073">
    <property type="entry name" value="GTP-bd"/>
</dbReference>
<dbReference type="InterPro" id="IPR005662">
    <property type="entry name" value="GTPase_Era-like"/>
</dbReference>
<dbReference type="InterPro" id="IPR015946">
    <property type="entry name" value="KH_dom-like_a/b"/>
</dbReference>
<dbReference type="InterPro" id="IPR004044">
    <property type="entry name" value="KH_dom_type_2"/>
</dbReference>
<dbReference type="InterPro" id="IPR009019">
    <property type="entry name" value="KH_sf_prok-type"/>
</dbReference>
<dbReference type="InterPro" id="IPR027417">
    <property type="entry name" value="P-loop_NTPase"/>
</dbReference>
<dbReference type="InterPro" id="IPR005225">
    <property type="entry name" value="Small_GTP-bd"/>
</dbReference>
<dbReference type="NCBIfam" id="TIGR00231">
    <property type="entry name" value="small_GTP"/>
    <property type="match status" value="1"/>
</dbReference>
<dbReference type="PANTHER" id="PTHR42698">
    <property type="entry name" value="GTPASE ERA"/>
    <property type="match status" value="1"/>
</dbReference>
<dbReference type="PANTHER" id="PTHR42698:SF1">
    <property type="entry name" value="GTPASE ERA, MITOCHONDRIAL"/>
    <property type="match status" value="1"/>
</dbReference>
<dbReference type="Pfam" id="PF07650">
    <property type="entry name" value="KH_2"/>
    <property type="match status" value="1"/>
</dbReference>
<dbReference type="Pfam" id="PF01926">
    <property type="entry name" value="MMR_HSR1"/>
    <property type="match status" value="1"/>
</dbReference>
<dbReference type="PRINTS" id="PR00326">
    <property type="entry name" value="GTP1OBG"/>
</dbReference>
<dbReference type="SUPFAM" id="SSF52540">
    <property type="entry name" value="P-loop containing nucleoside triphosphate hydrolases"/>
    <property type="match status" value="1"/>
</dbReference>
<dbReference type="SUPFAM" id="SSF54814">
    <property type="entry name" value="Prokaryotic type KH domain (KH-domain type II)"/>
    <property type="match status" value="1"/>
</dbReference>
<dbReference type="PROSITE" id="PS51713">
    <property type="entry name" value="G_ERA"/>
    <property type="match status" value="1"/>
</dbReference>
<name>ERAL1_MOUSE</name>